<comment type="function">
    <text evidence="2">Glucosylceramidase that catalyzes, within the lysosomal compartment, the hydrolysis of glucosylceramides/GlcCers (such as beta-D-glucosyl-(1&lt;-&gt;1')-N-acylsphing-4-enine) into free ceramides (such as N-acylsphing-4-enine) and glucose. Plays a central role in the degradation of complex lipids and the turnover of cellular membranes. Through the production of ceramides, participates in the PKC-activated salvage pathway of ceramide formation. Catalyzes the glucosylation of cholesterol, through a transglucosylation reaction where glucose is transferred from GlcCer to cholesterol. GlcCer containing mono-unsaturated fatty acids (such as beta-D-glucosyl-N-(9Z-octadecenoyl)-sphing-4-enine) are preferred as glucose donors for cholesterol glucosylation when compared with GlcCer containing same chain length of saturated fatty acids (such as beta-D-glucosyl-N-octadecanoyl-sphing-4-enine). Under specific conditions, may alternatively catalyze the reverse reaction, transferring glucose from cholesteryl 3-beta-D-glucoside to ceramide. Can also hydrolyze cholesteryl 3-beta-D-glucoside producing glucose and cholesterol. Catalyzes the hydrolysis of galactosylceramides/GalCers (such as beta-D-galactosyl-(1&lt;-&gt;1')-N-acylsphing-4-enine), as well as the transfer of galactose between GalCers and cholesterol in vitro, but with lower activity than with GlcCers. Contrary to GlcCer and GalCer, xylosylceramide/XylCer (such as beta-D-xyosyl-(1&lt;-&gt;1')-N-acylsphing-4-enine) is not a good substrate for hydrolysis, however it is a good xylose donor for transxylosylation activity to form cholesteryl 3-beta-D-xyloside.</text>
</comment>
<comment type="catalytic activity">
    <reaction evidence="2">
        <text>a beta-D-glucosyl-(1&lt;-&gt;1')-N-acylsphing-4-enine + H2O = an N-acylsphing-4-enine + D-glucose</text>
        <dbReference type="Rhea" id="RHEA:13269"/>
        <dbReference type="ChEBI" id="CHEBI:4167"/>
        <dbReference type="ChEBI" id="CHEBI:15377"/>
        <dbReference type="ChEBI" id="CHEBI:22801"/>
        <dbReference type="ChEBI" id="CHEBI:52639"/>
        <dbReference type="EC" id="3.2.1.45"/>
    </reaction>
    <physiologicalReaction direction="left-to-right" evidence="2">
        <dbReference type="Rhea" id="RHEA:13270"/>
    </physiologicalReaction>
</comment>
<comment type="catalytic activity">
    <reaction evidence="2">
        <text>a beta-D-galactosyl-(1&lt;-&gt;1')-N-acylsphing-4-enine + H2O = an N-acylsphing-4-enine + D-galactose</text>
        <dbReference type="Rhea" id="RHEA:14297"/>
        <dbReference type="ChEBI" id="CHEBI:4139"/>
        <dbReference type="ChEBI" id="CHEBI:15377"/>
        <dbReference type="ChEBI" id="CHEBI:18390"/>
        <dbReference type="ChEBI" id="CHEBI:52639"/>
        <dbReference type="EC" id="3.2.1.46"/>
    </reaction>
    <physiologicalReaction direction="left-to-right" evidence="2">
        <dbReference type="Rhea" id="RHEA:14298"/>
    </physiologicalReaction>
</comment>
<comment type="catalytic activity">
    <reaction evidence="2">
        <text>cholesteryl 3-beta-D-glucoside + H2O = cholesterol + D-glucose</text>
        <dbReference type="Rhea" id="RHEA:11956"/>
        <dbReference type="ChEBI" id="CHEBI:4167"/>
        <dbReference type="ChEBI" id="CHEBI:15377"/>
        <dbReference type="ChEBI" id="CHEBI:16113"/>
        <dbReference type="ChEBI" id="CHEBI:17495"/>
    </reaction>
    <physiologicalReaction direction="left-to-right" evidence="2">
        <dbReference type="Rhea" id="RHEA:11957"/>
    </physiologicalReaction>
</comment>
<comment type="catalytic activity">
    <reaction evidence="2">
        <text>a beta-D-glucosyl-(1&lt;-&gt;1')-N-acylsphing-4-enine + cholesterol = cholesteryl 3-beta-D-glucoside + an N-acylsphing-4-enine</text>
        <dbReference type="Rhea" id="RHEA:58264"/>
        <dbReference type="ChEBI" id="CHEBI:16113"/>
        <dbReference type="ChEBI" id="CHEBI:17495"/>
        <dbReference type="ChEBI" id="CHEBI:22801"/>
        <dbReference type="ChEBI" id="CHEBI:52639"/>
    </reaction>
    <physiologicalReaction direction="left-to-right" evidence="2">
        <dbReference type="Rhea" id="RHEA:58265"/>
    </physiologicalReaction>
    <physiologicalReaction direction="right-to-left" evidence="2">
        <dbReference type="Rhea" id="RHEA:58266"/>
    </physiologicalReaction>
</comment>
<comment type="catalytic activity">
    <reaction evidence="2">
        <text>beta-D-glucosyl-N-(9Z-octadecenoyl)-sphing-4E-enine + cholesterol = N-(9Z-octadecenoyl)-sphing-4-enine + cholesteryl 3-beta-D-glucoside</text>
        <dbReference type="Rhea" id="RHEA:58324"/>
        <dbReference type="ChEBI" id="CHEBI:16113"/>
        <dbReference type="ChEBI" id="CHEBI:17495"/>
        <dbReference type="ChEBI" id="CHEBI:77996"/>
        <dbReference type="ChEBI" id="CHEBI:139140"/>
    </reaction>
    <physiologicalReaction direction="left-to-right" evidence="2">
        <dbReference type="Rhea" id="RHEA:58325"/>
    </physiologicalReaction>
    <physiologicalReaction direction="right-to-left" evidence="2">
        <dbReference type="Rhea" id="RHEA:58326"/>
    </physiologicalReaction>
</comment>
<comment type="catalytic activity">
    <reaction evidence="2">
        <text>beta-D-glucosyl-N-octanoylsphing-4E-enine + cholesterol = N-octanoylsphing-4-enine + cholesteryl 3-beta-D-glucoside</text>
        <dbReference type="Rhea" id="RHEA:70303"/>
        <dbReference type="ChEBI" id="CHEBI:16113"/>
        <dbReference type="ChEBI" id="CHEBI:17495"/>
        <dbReference type="ChEBI" id="CHEBI:45815"/>
        <dbReference type="ChEBI" id="CHEBI:65222"/>
    </reaction>
    <physiologicalReaction direction="left-to-right" evidence="2">
        <dbReference type="Rhea" id="RHEA:70304"/>
    </physiologicalReaction>
    <physiologicalReaction direction="right-to-left" evidence="2">
        <dbReference type="Rhea" id="RHEA:70305"/>
    </physiologicalReaction>
</comment>
<comment type="catalytic activity">
    <reaction evidence="2">
        <text>beta-D-glucosyl-N-dodecanoylsphing-4-enine + cholesterol = N-dodecanoylsphing-4-enine + cholesteryl 3-beta-D-glucoside</text>
        <dbReference type="Rhea" id="RHEA:70307"/>
        <dbReference type="ChEBI" id="CHEBI:16113"/>
        <dbReference type="ChEBI" id="CHEBI:17495"/>
        <dbReference type="ChEBI" id="CHEBI:72956"/>
        <dbReference type="ChEBI" id="CHEBI:76297"/>
    </reaction>
    <physiologicalReaction direction="left-to-right" evidence="2">
        <dbReference type="Rhea" id="RHEA:70308"/>
    </physiologicalReaction>
    <physiologicalReaction direction="right-to-left" evidence="2">
        <dbReference type="Rhea" id="RHEA:70309"/>
    </physiologicalReaction>
</comment>
<comment type="catalytic activity">
    <reaction evidence="2">
        <text>beta-D-glucosyl-(1&lt;-&gt;1)-N-octadecanoylsphing-4-enine + cholesterol = N-octadecanoylsphing-4-enine + cholesteryl 3-beta-D-glucoside</text>
        <dbReference type="Rhea" id="RHEA:70311"/>
        <dbReference type="ChEBI" id="CHEBI:16113"/>
        <dbReference type="ChEBI" id="CHEBI:17495"/>
        <dbReference type="ChEBI" id="CHEBI:72961"/>
        <dbReference type="ChEBI" id="CHEBI:84719"/>
    </reaction>
    <physiologicalReaction direction="left-to-right" evidence="2">
        <dbReference type="Rhea" id="RHEA:70312"/>
    </physiologicalReaction>
    <physiologicalReaction direction="right-to-left" evidence="2">
        <dbReference type="Rhea" id="RHEA:70313"/>
    </physiologicalReaction>
</comment>
<comment type="catalytic activity">
    <reaction evidence="2">
        <text>beta-D-glucosyl-(1&lt;-&gt;1')-N-(15Z-tetracosenoyl)-sphing-4-enine + cholesterol = N-(15Z-tetracosenoyl)-sphing-4-enine + cholesteryl 3-beta-D-glucoside</text>
        <dbReference type="Rhea" id="RHEA:70315"/>
        <dbReference type="ChEBI" id="CHEBI:16113"/>
        <dbReference type="ChEBI" id="CHEBI:17495"/>
        <dbReference type="ChEBI" id="CHEBI:74450"/>
        <dbReference type="ChEBI" id="CHEBI:76302"/>
    </reaction>
    <physiologicalReaction direction="left-to-right" evidence="2">
        <dbReference type="Rhea" id="RHEA:70316"/>
    </physiologicalReaction>
    <physiologicalReaction direction="right-to-left" evidence="2">
        <dbReference type="Rhea" id="RHEA:70317"/>
    </physiologicalReaction>
</comment>
<comment type="catalytic activity">
    <reaction evidence="2">
        <text>a beta-D-galactosyl-(1&lt;-&gt;1')-N-acylsphing-4-enine + cholesterol = cholesteryl 3-beta-D-galactoside + an N-acylsphing-4-enine</text>
        <dbReference type="Rhea" id="RHEA:70235"/>
        <dbReference type="ChEBI" id="CHEBI:16113"/>
        <dbReference type="ChEBI" id="CHEBI:18390"/>
        <dbReference type="ChEBI" id="CHEBI:52639"/>
        <dbReference type="ChEBI" id="CHEBI:189066"/>
    </reaction>
    <physiologicalReaction direction="left-to-right" evidence="2">
        <dbReference type="Rhea" id="RHEA:70236"/>
    </physiologicalReaction>
    <physiologicalReaction direction="right-to-left" evidence="2">
        <dbReference type="Rhea" id="RHEA:70237"/>
    </physiologicalReaction>
</comment>
<comment type="catalytic activity">
    <reaction evidence="2">
        <text>1-(beta-D-galactosyl)-N-dodecanoylsphing-4-enine + cholesterol = cholesteryl 3-beta-D-galactoside + N-dodecanoylsphing-4-enine</text>
        <dbReference type="Rhea" id="RHEA:70255"/>
        <dbReference type="ChEBI" id="CHEBI:16113"/>
        <dbReference type="ChEBI" id="CHEBI:72956"/>
        <dbReference type="ChEBI" id="CHEBI:73432"/>
        <dbReference type="ChEBI" id="CHEBI:189066"/>
    </reaction>
    <physiologicalReaction direction="left-to-right" evidence="2">
        <dbReference type="Rhea" id="RHEA:70256"/>
    </physiologicalReaction>
    <physiologicalReaction direction="right-to-left" evidence="2">
        <dbReference type="Rhea" id="RHEA:70257"/>
    </physiologicalReaction>
</comment>
<comment type="catalytic activity">
    <reaction evidence="2">
        <text>a beta-D-xylosyl-(1&lt;-&gt;1')-N-acylsphing-4-enine + cholesterol = cholesteryl 3-beta-D-xyloside + an N-acylsphing-4-enine</text>
        <dbReference type="Rhea" id="RHEA:70239"/>
        <dbReference type="ChEBI" id="CHEBI:16113"/>
        <dbReference type="ChEBI" id="CHEBI:52639"/>
        <dbReference type="ChEBI" id="CHEBI:189067"/>
        <dbReference type="ChEBI" id="CHEBI:189068"/>
    </reaction>
    <physiologicalReaction direction="left-to-right" evidence="2">
        <dbReference type="Rhea" id="RHEA:70240"/>
    </physiologicalReaction>
</comment>
<comment type="catalytic activity">
    <reaction evidence="2">
        <text>beta-D-xylosyl-(1&lt;-&gt;1')-N-(9Z-octadecenoyl)-sphing-4-enine + cholesterol = cholesteryl 3-beta-D-xyloside + N-(9Z-octadecenoyl)-sphing-4-enine</text>
        <dbReference type="Rhea" id="RHEA:70251"/>
        <dbReference type="ChEBI" id="CHEBI:16113"/>
        <dbReference type="ChEBI" id="CHEBI:77996"/>
        <dbReference type="ChEBI" id="CHEBI:189067"/>
        <dbReference type="ChEBI" id="CHEBI:189081"/>
    </reaction>
    <physiologicalReaction direction="left-to-right" evidence="2">
        <dbReference type="Rhea" id="RHEA:70252"/>
    </physiologicalReaction>
</comment>
<comment type="pathway">
    <text evidence="2">Steroid metabolism; cholesterol metabolism.</text>
</comment>
<comment type="pathway">
    <text evidence="2">Sphingolipid metabolism.</text>
</comment>
<comment type="subunit">
    <text evidence="2">Interacts with saposin-C. Interacts with SCARB2. Interacts with TCP1. Interacts with GRN; this interaction prevents aggregation of GBA1-SCARB2 complex via interaction with HSPA1A upon stress (By similarity).</text>
</comment>
<comment type="subcellular location">
    <subcellularLocation>
        <location evidence="2">Lysosome membrane</location>
        <topology evidence="2">Peripheral membrane protein</topology>
        <orientation evidence="2">Lumenal side</orientation>
    </subcellularLocation>
    <text evidence="2">Interaction with saposin-C promotes membrane association. Targeting to lysosomes occurs through an alternative MPR-independent mechanism via SCARB2.</text>
</comment>
<comment type="similarity">
    <text evidence="4">Belongs to the glycosyl hydrolase 30 family.</text>
</comment>
<feature type="signal peptide" evidence="1">
    <location>
        <begin position="1"/>
        <end position="39"/>
    </location>
</feature>
<feature type="chain" id="PRO_0000278648" description="Lysosomal acid glucosylceramidase">
    <location>
        <begin position="40"/>
        <end position="536"/>
    </location>
</feature>
<feature type="active site" description="Proton donor" evidence="1">
    <location>
        <position position="274"/>
    </location>
</feature>
<feature type="active site" description="Nucleophile" evidence="1">
    <location>
        <position position="379"/>
    </location>
</feature>
<feature type="glycosylation site" description="N-linked (GlcNAc...) asparagine" evidence="3">
    <location>
        <position position="58"/>
    </location>
</feature>
<feature type="glycosylation site" description="N-linked (GlcNAc...) asparagine" evidence="3">
    <location>
        <position position="98"/>
    </location>
</feature>
<feature type="glycosylation site" description="N-linked (GlcNAc...) asparagine" evidence="3">
    <location>
        <position position="185"/>
    </location>
</feature>
<feature type="glycosylation site" description="N-linked (GlcNAc...) asparagine" evidence="3">
    <location>
        <position position="208"/>
    </location>
</feature>
<feature type="glycosylation site" description="N-linked (GlcNAc...) asparagine" evidence="3">
    <location>
        <position position="309"/>
    </location>
</feature>
<feature type="glycosylation site" description="N-linked (GlcNAc...) asparagine" evidence="3">
    <location>
        <position position="501"/>
    </location>
</feature>
<feature type="disulfide bond" evidence="2">
    <location>
        <begin position="43"/>
        <end position="55"/>
    </location>
</feature>
<feature type="disulfide bond" evidence="2">
    <location>
        <begin position="57"/>
        <end position="62"/>
    </location>
</feature>
<evidence type="ECO:0000250" key="1"/>
<evidence type="ECO:0000250" key="2">
    <source>
        <dbReference type="UniProtKB" id="P04062"/>
    </source>
</evidence>
<evidence type="ECO:0000255" key="3"/>
<evidence type="ECO:0000305" key="4"/>
<name>GBA1_BOVIN</name>
<organism>
    <name type="scientific">Bos taurus</name>
    <name type="common">Bovine</name>
    <dbReference type="NCBI Taxonomy" id="9913"/>
    <lineage>
        <taxon>Eukaryota</taxon>
        <taxon>Metazoa</taxon>
        <taxon>Chordata</taxon>
        <taxon>Craniata</taxon>
        <taxon>Vertebrata</taxon>
        <taxon>Euteleostomi</taxon>
        <taxon>Mammalia</taxon>
        <taxon>Eutheria</taxon>
        <taxon>Laurasiatheria</taxon>
        <taxon>Artiodactyla</taxon>
        <taxon>Ruminantia</taxon>
        <taxon>Pecora</taxon>
        <taxon>Bovidae</taxon>
        <taxon>Bovinae</taxon>
        <taxon>Bos</taxon>
    </lineage>
</organism>
<proteinExistence type="evidence at transcript level"/>
<dbReference type="EC" id="3.2.1.45" evidence="2"/>
<dbReference type="EC" id="2.4.1.-" evidence="2"/>
<dbReference type="EC" id="3.2.1.-" evidence="2"/>
<dbReference type="EC" id="3.2.1.46" evidence="2"/>
<dbReference type="EMBL" id="BC112823">
    <property type="protein sequence ID" value="AAI12824.1"/>
    <property type="molecule type" value="mRNA"/>
</dbReference>
<dbReference type="RefSeq" id="NP_001039886.1">
    <property type="nucleotide sequence ID" value="NM_001046421.2"/>
</dbReference>
<dbReference type="SMR" id="Q2KHZ8"/>
<dbReference type="FunCoup" id="Q2KHZ8">
    <property type="interactions" value="1168"/>
</dbReference>
<dbReference type="STRING" id="9913.ENSBTAP00000060772"/>
<dbReference type="BindingDB" id="Q2KHZ8"/>
<dbReference type="ChEMBL" id="CHEMBL1275219"/>
<dbReference type="CAZy" id="GH30">
    <property type="family name" value="Glycoside Hydrolase Family 30"/>
</dbReference>
<dbReference type="GlyCosmos" id="Q2KHZ8">
    <property type="glycosylation" value="6 sites, No reported glycans"/>
</dbReference>
<dbReference type="GlyGen" id="Q2KHZ8">
    <property type="glycosylation" value="6 sites"/>
</dbReference>
<dbReference type="PaxDb" id="9913-ENSBTAP00000019765"/>
<dbReference type="GeneID" id="537087"/>
<dbReference type="KEGG" id="bta:537087"/>
<dbReference type="CTD" id="2629"/>
<dbReference type="eggNOG" id="KOG2566">
    <property type="taxonomic scope" value="Eukaryota"/>
</dbReference>
<dbReference type="InParanoid" id="Q2KHZ8"/>
<dbReference type="OrthoDB" id="2160638at2759"/>
<dbReference type="UniPathway" id="UPA00296"/>
<dbReference type="PRO" id="PR:Q2KHZ8"/>
<dbReference type="Proteomes" id="UP000009136">
    <property type="component" value="Unplaced"/>
</dbReference>
<dbReference type="GO" id="GO:0005783">
    <property type="term" value="C:endoplasmic reticulum"/>
    <property type="evidence" value="ECO:0000250"/>
    <property type="project" value="UniProtKB"/>
</dbReference>
<dbReference type="GO" id="GO:0005794">
    <property type="term" value="C:Golgi apparatus"/>
    <property type="evidence" value="ECO:0000250"/>
    <property type="project" value="UniProtKB"/>
</dbReference>
<dbReference type="GO" id="GO:0005765">
    <property type="term" value="C:lysosomal membrane"/>
    <property type="evidence" value="ECO:0000250"/>
    <property type="project" value="UniProtKB"/>
</dbReference>
<dbReference type="GO" id="GO:0005764">
    <property type="term" value="C:lysosome"/>
    <property type="evidence" value="ECO:0000250"/>
    <property type="project" value="UniProtKB"/>
</dbReference>
<dbReference type="GO" id="GO:0005802">
    <property type="term" value="C:trans-Golgi network"/>
    <property type="evidence" value="ECO:0000250"/>
    <property type="project" value="UniProtKB"/>
</dbReference>
<dbReference type="GO" id="GO:0004336">
    <property type="term" value="F:galactosylceramidase activity"/>
    <property type="evidence" value="ECO:0007669"/>
    <property type="project" value="RHEA"/>
</dbReference>
<dbReference type="GO" id="GO:0004348">
    <property type="term" value="F:glucosylceramidase activity"/>
    <property type="evidence" value="ECO:0000250"/>
    <property type="project" value="UniProtKB"/>
</dbReference>
<dbReference type="GO" id="GO:0046527">
    <property type="term" value="F:glucosyltransferase activity"/>
    <property type="evidence" value="ECO:0000250"/>
    <property type="project" value="UniProtKB"/>
</dbReference>
<dbReference type="GO" id="GO:0050295">
    <property type="term" value="F:steryl-beta-glucosidase activity"/>
    <property type="evidence" value="ECO:0000250"/>
    <property type="project" value="UniProtKB"/>
</dbReference>
<dbReference type="GO" id="GO:0006914">
    <property type="term" value="P:autophagy"/>
    <property type="evidence" value="ECO:0000250"/>
    <property type="project" value="UniProtKB"/>
</dbReference>
<dbReference type="GO" id="GO:0008203">
    <property type="term" value="P:cholesterol metabolic process"/>
    <property type="evidence" value="ECO:0000250"/>
    <property type="project" value="UniProtKB"/>
</dbReference>
<dbReference type="GO" id="GO:0006680">
    <property type="term" value="P:glucosylceramide catabolic process"/>
    <property type="evidence" value="ECO:0000250"/>
    <property type="project" value="UniProtKB"/>
</dbReference>
<dbReference type="GO" id="GO:0030259">
    <property type="term" value="P:lipid glycosylation"/>
    <property type="evidence" value="ECO:0000250"/>
    <property type="project" value="UniProtKB"/>
</dbReference>
<dbReference type="GO" id="GO:0007040">
    <property type="term" value="P:lysosome organization"/>
    <property type="evidence" value="ECO:0000250"/>
    <property type="project" value="UniProtKB"/>
</dbReference>
<dbReference type="GO" id="GO:0032006">
    <property type="term" value="P:regulation of TOR signaling"/>
    <property type="evidence" value="ECO:0000250"/>
    <property type="project" value="UniProtKB"/>
</dbReference>
<dbReference type="FunFam" id="3.20.20.80:FF:000030">
    <property type="entry name" value="Lysosomal acid glucosylceramidase"/>
    <property type="match status" value="1"/>
</dbReference>
<dbReference type="Gene3D" id="3.20.20.80">
    <property type="entry name" value="Glycosidases"/>
    <property type="match status" value="1"/>
</dbReference>
<dbReference type="InterPro" id="IPR033452">
    <property type="entry name" value="GH30_C"/>
</dbReference>
<dbReference type="InterPro" id="IPR001139">
    <property type="entry name" value="Glyco_hydro_30"/>
</dbReference>
<dbReference type="InterPro" id="IPR033453">
    <property type="entry name" value="Glyco_hydro_30_TIM-barrel"/>
</dbReference>
<dbReference type="InterPro" id="IPR017853">
    <property type="entry name" value="Glycoside_hydrolase_SF"/>
</dbReference>
<dbReference type="PANTHER" id="PTHR11069">
    <property type="entry name" value="GLUCOSYLCERAMIDASE"/>
    <property type="match status" value="1"/>
</dbReference>
<dbReference type="PANTHER" id="PTHR11069:SF23">
    <property type="entry name" value="LYSOSOMAL ACID GLUCOSYLCERAMIDASE"/>
    <property type="match status" value="1"/>
</dbReference>
<dbReference type="Pfam" id="PF02055">
    <property type="entry name" value="Glyco_hydro_30"/>
    <property type="match status" value="1"/>
</dbReference>
<dbReference type="Pfam" id="PF17189">
    <property type="entry name" value="Glyco_hydro_30C"/>
    <property type="match status" value="1"/>
</dbReference>
<dbReference type="PRINTS" id="PR00843">
    <property type="entry name" value="GLHYDRLASE30"/>
</dbReference>
<dbReference type="SUPFAM" id="SSF51445">
    <property type="entry name" value="(Trans)glycosidases"/>
    <property type="match status" value="1"/>
</dbReference>
<dbReference type="SUPFAM" id="SSF51011">
    <property type="entry name" value="Glycosyl hydrolase domain"/>
    <property type="match status" value="2"/>
</dbReference>
<keyword id="KW-0153">Cholesterol metabolism</keyword>
<keyword id="KW-1015">Disulfide bond</keyword>
<keyword id="KW-0325">Glycoprotein</keyword>
<keyword id="KW-0326">Glycosidase</keyword>
<keyword id="KW-0328">Glycosyltransferase</keyword>
<keyword id="KW-0378">Hydrolase</keyword>
<keyword id="KW-0443">Lipid metabolism</keyword>
<keyword id="KW-0458">Lysosome</keyword>
<keyword id="KW-0472">Membrane</keyword>
<keyword id="KW-1185">Reference proteome</keyword>
<keyword id="KW-0732">Signal</keyword>
<keyword id="KW-0746">Sphingolipid metabolism</keyword>
<keyword id="KW-0753">Steroid metabolism</keyword>
<keyword id="KW-1207">Sterol metabolism</keyword>
<keyword id="KW-0808">Transferase</keyword>
<gene>
    <name type="primary">GBA1</name>
    <name evidence="2" type="synonym">GBA</name>
</gene>
<sequence length="536" mass="59855">MELSSPSREEYPMPRGRVGIMAASLMGLLLLHTVSWVSGARPCSPKSFGYSSVVCVCNGTYCDSLDPLTLPDPGTFSRFESTRSGRRMELSLGTIQANRTGTGLLLTLQPDQKFQKVKGFGGAMTDAAALNILALSPAARNLLLKSYFSEEGIEYNIIRVPMASCDFSIRTYTYDDSPDDFQLLNFSLPEEDVKLKIPLIHQALELANRSVSLFASPWTSPTWLKTNGAVNGKGTLKGQAGDLYHKTWARYFVKFLDAYAEHKLRFWAVTAENEPTAGLLTGYPFQCLGFTPEHQRDFIARDLGPILANSTHRDVRLLMLDDQRLLLPRWAQVVLADPEAAKYVHGIAVHWYLDFLAPAKATLGETHRLFPNTMLFASEACVGSKFWEQSVRLGSWDRGMRYSHSIITNLLYHVVGWTDWNLALNPEGGPNWVRNFVDSPIIVDIAKDTFYKQPMFYHLGHFSKFIPEGSQRVGLVASKKSDLDTVALLRPDGSAVAVVLNRSSKDVPLTIKDPAVGFMETVSPGYSIHTYLWRRQ</sequence>
<reference key="1">
    <citation type="submission" date="2006-01" db="EMBL/GenBank/DDBJ databases">
        <authorList>
            <consortium name="NIH - Mammalian Gene Collection (MGC) project"/>
        </authorList>
    </citation>
    <scope>NUCLEOTIDE SEQUENCE [LARGE SCALE MRNA]</scope>
    <source>
        <strain>Hereford</strain>
        <tissue>Heart ventricle</tissue>
    </source>
</reference>
<protein>
    <recommendedName>
        <fullName evidence="4">Lysosomal acid glucosylceramidase</fullName>
        <ecNumber evidence="2">3.2.1.45</ecNumber>
    </recommendedName>
    <alternativeName>
        <fullName>Acid beta-glucosidase</fullName>
    </alternativeName>
    <alternativeName>
        <fullName>Beta-glucocerebrosidase</fullName>
    </alternativeName>
    <alternativeName>
        <fullName evidence="2">Cholesterol glucosyltransferase</fullName>
        <shortName evidence="2">SGTase</shortName>
        <ecNumber evidence="2">2.4.1.-</ecNumber>
    </alternativeName>
    <alternativeName>
        <fullName evidence="2">Cholesteryl-beta-glucosidase</fullName>
        <ecNumber evidence="2">3.2.1.-</ecNumber>
    </alternativeName>
    <alternativeName>
        <fullName>D-glucosyl-N-acylsphingosine glucohydrolase</fullName>
    </alternativeName>
    <alternativeName>
        <fullName evidence="4">Lysosomal cholesterol glycosyltransferase</fullName>
    </alternativeName>
    <alternativeName>
        <fullName evidence="4">Lysosomal galactosylceramidase</fullName>
        <ecNumber evidence="2">3.2.1.46</ecNumber>
    </alternativeName>
    <alternativeName>
        <fullName evidence="4">Lysosomal glycosylceramidase</fullName>
    </alternativeName>
</protein>
<accession>Q2KHZ8</accession>